<comment type="function">
    <text evidence="1">FAD-dependent monooxygenase required for two non-consecutive steps during ubiquinone biosynthesis. Required for the C5-ring hydroxylation during ubiquinone biosynthesis by catalyzing the hydroxylation of 4-hydroxy-3-(all-trans-decaprenyl)benzoic acid to 3,4-dihydroxy-5-(all-trans-decaprenyl)benzoic acid. Also acts downstream of COQ4, for the C1-hydroxylation during ubiquinone biosynthesis by catalyzing the hydroxylation of 2-methoxy-6-(all-trans-decaprenyl)phenol to 2-methoxy-6-(all-trans-decaprenyl)benzene-1,4-diol. The electrons required for the hydroxylation reaction are funneled indirectly to COQ6 from NADPH via a ferredoxin/ferredoxin reductase system composed of FDX2 and FDXR.</text>
</comment>
<comment type="catalytic activity">
    <reaction evidence="1">
        <text>4-hydroxy-3-(all-trans-decaprenyl)benzoate + 2 reduced [2Fe-2S]-[ferredoxin] + O2 + 2 H(+) = 3,4-dihydroxy-5-(all-trans-decaprenyl)benzoate + 2 oxidized [2Fe-2S]-[ferredoxin] + H2O</text>
        <dbReference type="Rhea" id="RHEA:81259"/>
        <dbReference type="Rhea" id="RHEA-COMP:10000"/>
        <dbReference type="Rhea" id="RHEA-COMP:10001"/>
        <dbReference type="ChEBI" id="CHEBI:15377"/>
        <dbReference type="ChEBI" id="CHEBI:15378"/>
        <dbReference type="ChEBI" id="CHEBI:15379"/>
        <dbReference type="ChEBI" id="CHEBI:33737"/>
        <dbReference type="ChEBI" id="CHEBI:33738"/>
        <dbReference type="ChEBI" id="CHEBI:62793"/>
        <dbReference type="ChEBI" id="CHEBI:84503"/>
        <dbReference type="EC" id="1.14.15.45"/>
    </reaction>
</comment>
<comment type="catalytic activity">
    <reaction evidence="1">
        <text>2-methoxy-6-(all-trans-decaprenyl)phenol + 2 reduced [2Fe-2S]-[ferredoxin] + O2 + 2 H(+) = 2-methoxy-6-(all-trans-decaprenyl)benzene-1,4-diol + 2 oxidized [2Fe-2S]-[ferredoxin] + H2O</text>
        <dbReference type="Rhea" id="RHEA:81295"/>
        <dbReference type="Rhea" id="RHEA-COMP:10000"/>
        <dbReference type="Rhea" id="RHEA-COMP:10001"/>
        <dbReference type="ChEBI" id="CHEBI:15377"/>
        <dbReference type="ChEBI" id="CHEBI:15378"/>
        <dbReference type="ChEBI" id="CHEBI:15379"/>
        <dbReference type="ChEBI" id="CHEBI:33737"/>
        <dbReference type="ChEBI" id="CHEBI:33738"/>
        <dbReference type="ChEBI" id="CHEBI:50774"/>
        <dbReference type="ChEBI" id="CHEBI:64180"/>
        <dbReference type="EC" id="1.14.15.46"/>
    </reaction>
</comment>
<comment type="cofactor">
    <cofactor evidence="1">
        <name>FAD</name>
        <dbReference type="ChEBI" id="CHEBI:57692"/>
    </cofactor>
</comment>
<comment type="pathway">
    <text evidence="1">Cofactor biosynthesis; ubiquinone biosynthesis.</text>
</comment>
<comment type="subunit">
    <text evidence="1">Component of a multi-subunit COQ enzyme complex, composed of at least COQ3, COQ4, COQ5, COQ6, COQ7 and COQ9. Interacts with COQ8B and COQ7.</text>
</comment>
<comment type="subcellular location">
    <subcellularLocation>
        <location evidence="1">Mitochondrion inner membrane</location>
        <topology evidence="1">Peripheral membrane protein</topology>
        <orientation evidence="1">Matrix side</orientation>
    </subcellularLocation>
    <subcellularLocation>
        <location evidence="1 2">Golgi apparatus</location>
    </subcellularLocation>
    <subcellularLocation>
        <location evidence="1 2">Cell projection</location>
    </subcellularLocation>
    <text evidence="1 2">Localizes to cell processes and Golgi apparatus in podocytes.</text>
</comment>
<comment type="tissue specificity">
    <text evidence="2">In the kidney, expressed almost exclusively in glomerular podocytes. In the inner ear, expressed in the spiral ganglion, as well as in stria vascularis and spiral ligament cells.</text>
</comment>
<comment type="similarity">
    <text evidence="1">Belongs to the UbiH/COQ6 family.</text>
</comment>
<reference key="1">
    <citation type="submission" date="2005-07" db="EMBL/GenBank/DDBJ databases">
        <authorList>
            <person name="Mural R.J."/>
            <person name="Adams M.D."/>
            <person name="Myers E.W."/>
            <person name="Smith H.O."/>
            <person name="Venter J.C."/>
        </authorList>
    </citation>
    <scope>NUCLEOTIDE SEQUENCE [LARGE SCALE GENOMIC DNA]</scope>
</reference>
<reference key="2">
    <citation type="journal article" date="2004" name="Genome Res.">
        <title>The status, quality, and expansion of the NIH full-length cDNA project: the Mammalian Gene Collection (MGC).</title>
        <authorList>
            <consortium name="The MGC Project Team"/>
        </authorList>
    </citation>
    <scope>NUCLEOTIDE SEQUENCE [LARGE SCALE MRNA]</scope>
    <source>
        <tissue>Kidney</tissue>
    </source>
</reference>
<reference key="3">
    <citation type="journal article" date="2011" name="J. Clin. Invest.">
        <title>COQ6 mutations in human patients produce nephrotic syndrome with sensorineural deafness.</title>
        <authorList>
            <person name="Heeringa S.F."/>
            <person name="Chernin G."/>
            <person name="Chaki M."/>
            <person name="Zhou W."/>
            <person name="Sloan A.J."/>
            <person name="Ji Z."/>
            <person name="Xie L.X."/>
            <person name="Salviati L."/>
            <person name="Hurd T.W."/>
            <person name="Vega-Warner V."/>
            <person name="Killen P.D."/>
            <person name="Raphael Y."/>
            <person name="Ashraf S."/>
            <person name="Ovunc B."/>
            <person name="Schoeb D.S."/>
            <person name="McLaughlin H.M."/>
            <person name="Airik R."/>
            <person name="Vlangos C.N."/>
            <person name="Gbadegesin R."/>
            <person name="Hinkes B."/>
            <person name="Saisawat P."/>
            <person name="Trevisson E."/>
            <person name="Doimo M."/>
            <person name="Casarin A."/>
            <person name="Pertegato V."/>
            <person name="Giorgi G."/>
            <person name="Prokisch H."/>
            <person name="Rotig A."/>
            <person name="Nurnberg G."/>
            <person name="Becker C."/>
            <person name="Wang S."/>
            <person name="Ozaltin F."/>
            <person name="Topaloglu R."/>
            <person name="Bakkaloglu A."/>
            <person name="Bakkaloglu S.A."/>
            <person name="Muller D."/>
            <person name="Beissert A."/>
            <person name="Mir S."/>
            <person name="Berdeli A."/>
            <person name="Varpizen S."/>
            <person name="Zenker M."/>
            <person name="Matejas V."/>
            <person name="Santos-Ocana C."/>
            <person name="Navas P."/>
            <person name="Kusakabe T."/>
            <person name="Kispert A."/>
            <person name="Akman S."/>
            <person name="Soliman N.A."/>
            <person name="Krick S."/>
            <person name="Mundel P."/>
            <person name="Reiser J."/>
            <person name="Nurnberg P."/>
            <person name="Clarke C.F."/>
            <person name="Wiggins R.C."/>
            <person name="Faul C."/>
            <person name="Hildebrandt F."/>
        </authorList>
    </citation>
    <scope>SUBCELLULAR LOCATION</scope>
    <scope>TISSUE SPECIFICITY</scope>
</reference>
<name>COQ6_RAT</name>
<protein>
    <recommendedName>
        <fullName evidence="1">Ubiquinone biosynthesis monooxygenase COQ6, mitochondrial</fullName>
        <ecNumber evidence="1">1.14.15.45</ecNumber>
    </recommendedName>
    <alternativeName>
        <fullName evidence="1">2-methoxy-6-polyprenolphenol 4-hydroxylase</fullName>
        <ecNumber evidence="1">1.14.15.46</ecNumber>
    </alternativeName>
    <alternativeName>
        <fullName evidence="1">Coenzyme Q10 monooxygenase 6</fullName>
    </alternativeName>
</protein>
<dbReference type="EC" id="1.14.15.45" evidence="1"/>
<dbReference type="EC" id="1.14.15.46" evidence="1"/>
<dbReference type="EMBL" id="CH473982">
    <property type="protein sequence ID" value="EDL81500.1"/>
    <property type="molecule type" value="Genomic_DNA"/>
</dbReference>
<dbReference type="EMBL" id="BC079342">
    <property type="protein sequence ID" value="AAH79342.1"/>
    <property type="molecule type" value="mRNA"/>
</dbReference>
<dbReference type="RefSeq" id="NP_001011983.1">
    <property type="nucleotide sequence ID" value="NM_001011983.1"/>
</dbReference>
<dbReference type="SMR" id="Q68FU7"/>
<dbReference type="FunCoup" id="Q68FU7">
    <property type="interactions" value="2128"/>
</dbReference>
<dbReference type="STRING" id="10116.ENSRNOP00000014914"/>
<dbReference type="PhosphoSitePlus" id="Q68FU7"/>
<dbReference type="PaxDb" id="10116-ENSRNOP00000014914"/>
<dbReference type="Ensembl" id="ENSRNOT00000014913.7">
    <property type="protein sequence ID" value="ENSRNOP00000014914.5"/>
    <property type="gene ID" value="ENSRNOG00000011164.7"/>
</dbReference>
<dbReference type="GeneID" id="299195"/>
<dbReference type="KEGG" id="rno:299195"/>
<dbReference type="UCSC" id="RGD:1311149">
    <property type="organism name" value="rat"/>
</dbReference>
<dbReference type="AGR" id="RGD:1311149"/>
<dbReference type="CTD" id="51004"/>
<dbReference type="RGD" id="1311149">
    <property type="gene designation" value="Coq6"/>
</dbReference>
<dbReference type="eggNOG" id="KOG3855">
    <property type="taxonomic scope" value="Eukaryota"/>
</dbReference>
<dbReference type="GeneTree" id="ENSGT00390000015152"/>
<dbReference type="HOGENOM" id="CLU_009665_8_0_1"/>
<dbReference type="InParanoid" id="Q68FU7"/>
<dbReference type="OMA" id="VKQMQVW"/>
<dbReference type="OrthoDB" id="683240at2759"/>
<dbReference type="PhylomeDB" id="Q68FU7"/>
<dbReference type="TreeFam" id="TF105772"/>
<dbReference type="Reactome" id="R-RNO-2142789">
    <property type="pathway name" value="Ubiquinol biosynthesis"/>
</dbReference>
<dbReference type="UniPathway" id="UPA00232"/>
<dbReference type="PRO" id="PR:Q68FU7"/>
<dbReference type="Proteomes" id="UP000002494">
    <property type="component" value="Chromosome 6"/>
</dbReference>
<dbReference type="Proteomes" id="UP000234681">
    <property type="component" value="Chromosome 6"/>
</dbReference>
<dbReference type="Bgee" id="ENSRNOG00000011164">
    <property type="expression patterns" value="Expressed in heart and 20 other cell types or tissues"/>
</dbReference>
<dbReference type="GO" id="GO:0042995">
    <property type="term" value="C:cell projection"/>
    <property type="evidence" value="ECO:0007669"/>
    <property type="project" value="UniProtKB-SubCell"/>
</dbReference>
<dbReference type="GO" id="GO:0031314">
    <property type="term" value="C:extrinsic component of mitochondrial inner membrane"/>
    <property type="evidence" value="ECO:0007669"/>
    <property type="project" value="UniProtKB-UniRule"/>
</dbReference>
<dbReference type="GO" id="GO:0005794">
    <property type="term" value="C:Golgi apparatus"/>
    <property type="evidence" value="ECO:0007669"/>
    <property type="project" value="UniProtKB-SubCell"/>
</dbReference>
<dbReference type="GO" id="GO:0005743">
    <property type="term" value="C:mitochondrial inner membrane"/>
    <property type="evidence" value="ECO:0000266"/>
    <property type="project" value="RGD"/>
</dbReference>
<dbReference type="GO" id="GO:0005739">
    <property type="term" value="C:mitochondrion"/>
    <property type="evidence" value="ECO:0000318"/>
    <property type="project" value="GO_Central"/>
</dbReference>
<dbReference type="GO" id="GO:0110142">
    <property type="term" value="C:ubiquinone biosynthesis complex"/>
    <property type="evidence" value="ECO:0000266"/>
    <property type="project" value="RGD"/>
</dbReference>
<dbReference type="GO" id="GO:0120538">
    <property type="term" value="F:2-methoxy-6-polyprenolphenol 4-hydroxylase activity"/>
    <property type="evidence" value="ECO:0000250"/>
    <property type="project" value="UniProtKB"/>
</dbReference>
<dbReference type="GO" id="GO:0106364">
    <property type="term" value="F:4-hydroxy-3-all-trans-polyprenylbenzoate oxygenase activity"/>
    <property type="evidence" value="ECO:0000250"/>
    <property type="project" value="UniProtKB"/>
</dbReference>
<dbReference type="GO" id="GO:0071949">
    <property type="term" value="F:FAD binding"/>
    <property type="evidence" value="ECO:0007669"/>
    <property type="project" value="InterPro"/>
</dbReference>
<dbReference type="GO" id="GO:0016491">
    <property type="term" value="F:oxidoreductase activity"/>
    <property type="evidence" value="ECO:0000318"/>
    <property type="project" value="GO_Central"/>
</dbReference>
<dbReference type="GO" id="GO:0016709">
    <property type="term" value="F:oxidoreductase activity, acting on paired donors, with incorporation or reduction of molecular oxygen, NAD(P)H as one donor, and incorporation of one atom of oxygen"/>
    <property type="evidence" value="ECO:0007669"/>
    <property type="project" value="Ensembl"/>
</dbReference>
<dbReference type="GO" id="GO:0016712">
    <property type="term" value="F:oxidoreductase activity, acting on paired donors, with incorporation or reduction of molecular oxygen, reduced flavin or flavoprotein as one donor, and incorporation of one atom of oxygen"/>
    <property type="evidence" value="ECO:0007669"/>
    <property type="project" value="UniProtKB-UniRule"/>
</dbReference>
<dbReference type="GO" id="GO:0006744">
    <property type="term" value="P:ubiquinone biosynthetic process"/>
    <property type="evidence" value="ECO:0000250"/>
    <property type="project" value="UniProtKB"/>
</dbReference>
<dbReference type="FunFam" id="3.30.9.10:FF:000111">
    <property type="entry name" value="Ubiquinone biosynthesis monooxygenase COQ6, mitochondrial"/>
    <property type="match status" value="1"/>
</dbReference>
<dbReference type="FunFam" id="3.50.50.60:FF:000066">
    <property type="entry name" value="Ubiquinone biosynthesis monooxygenase COQ6, mitochondrial"/>
    <property type="match status" value="1"/>
</dbReference>
<dbReference type="FunFam" id="3.50.50.60:FF:000086">
    <property type="entry name" value="Ubiquinone biosynthesis monooxygenase COQ6, mitochondrial"/>
    <property type="match status" value="1"/>
</dbReference>
<dbReference type="Gene3D" id="3.50.50.60">
    <property type="entry name" value="FAD/NAD(P)-binding domain"/>
    <property type="match status" value="2"/>
</dbReference>
<dbReference type="HAMAP" id="MF_03193">
    <property type="entry name" value="COQ6_monooxygenase"/>
    <property type="match status" value="1"/>
</dbReference>
<dbReference type="InterPro" id="IPR002938">
    <property type="entry name" value="FAD-bd"/>
</dbReference>
<dbReference type="InterPro" id="IPR036188">
    <property type="entry name" value="FAD/NAD-bd_sf"/>
</dbReference>
<dbReference type="InterPro" id="IPR018168">
    <property type="entry name" value="Ubi_Hdrlase_CS"/>
</dbReference>
<dbReference type="InterPro" id="IPR010971">
    <property type="entry name" value="UbiH/COQ6"/>
</dbReference>
<dbReference type="InterPro" id="IPR051205">
    <property type="entry name" value="UbiH/COQ6_monooxygenase"/>
</dbReference>
<dbReference type="InterPro" id="IPR000689">
    <property type="entry name" value="UbQ_mOase_COQ6"/>
</dbReference>
<dbReference type="NCBIfam" id="TIGR01989">
    <property type="entry name" value="COQ6"/>
    <property type="match status" value="1"/>
</dbReference>
<dbReference type="NCBIfam" id="TIGR01988">
    <property type="entry name" value="Ubi-OHases"/>
    <property type="match status" value="1"/>
</dbReference>
<dbReference type="PANTHER" id="PTHR43876">
    <property type="entry name" value="UBIQUINONE BIOSYNTHESIS MONOOXYGENASE COQ6, MITOCHONDRIAL"/>
    <property type="match status" value="1"/>
</dbReference>
<dbReference type="PANTHER" id="PTHR43876:SF7">
    <property type="entry name" value="UBIQUINONE BIOSYNTHESIS MONOOXYGENASE COQ6, MITOCHONDRIAL"/>
    <property type="match status" value="1"/>
</dbReference>
<dbReference type="Pfam" id="PF01494">
    <property type="entry name" value="FAD_binding_3"/>
    <property type="match status" value="2"/>
</dbReference>
<dbReference type="PRINTS" id="PR00420">
    <property type="entry name" value="RNGMNOXGNASE"/>
</dbReference>
<dbReference type="SUPFAM" id="SSF51905">
    <property type="entry name" value="FAD/NAD(P)-binding domain"/>
    <property type="match status" value="1"/>
</dbReference>
<dbReference type="PROSITE" id="PS01304">
    <property type="entry name" value="UBIH"/>
    <property type="match status" value="1"/>
</dbReference>
<feature type="transit peptide" description="Mitochondrion" evidence="1">
    <location>
        <begin position="1"/>
        <end position="42"/>
    </location>
</feature>
<feature type="chain" id="PRO_0000418621" description="Ubiquinone biosynthesis monooxygenase COQ6, mitochondrial">
    <location>
        <begin position="43"/>
        <end position="476"/>
    </location>
</feature>
<proteinExistence type="evidence at transcript level"/>
<accession>Q68FU7</accession>
<organism>
    <name type="scientific">Rattus norvegicus</name>
    <name type="common">Rat</name>
    <dbReference type="NCBI Taxonomy" id="10116"/>
    <lineage>
        <taxon>Eukaryota</taxon>
        <taxon>Metazoa</taxon>
        <taxon>Chordata</taxon>
        <taxon>Craniata</taxon>
        <taxon>Vertebrata</taxon>
        <taxon>Euteleostomi</taxon>
        <taxon>Mammalia</taxon>
        <taxon>Eutheria</taxon>
        <taxon>Euarchontoglires</taxon>
        <taxon>Glires</taxon>
        <taxon>Rodentia</taxon>
        <taxon>Myomorpha</taxon>
        <taxon>Muroidea</taxon>
        <taxon>Muridae</taxon>
        <taxon>Murinae</taxon>
        <taxon>Rattus</taxon>
    </lineage>
</organism>
<gene>
    <name evidence="1" type="primary">Coq6</name>
</gene>
<keyword id="KW-0966">Cell projection</keyword>
<keyword id="KW-0274">FAD</keyword>
<keyword id="KW-0285">Flavoprotein</keyword>
<keyword id="KW-0333">Golgi apparatus</keyword>
<keyword id="KW-0472">Membrane</keyword>
<keyword id="KW-0496">Mitochondrion</keyword>
<keyword id="KW-0999">Mitochondrion inner membrane</keyword>
<keyword id="KW-0503">Monooxygenase</keyword>
<keyword id="KW-0560">Oxidoreductase</keyword>
<keyword id="KW-1185">Reference proteome</keyword>
<keyword id="KW-0809">Transit peptide</keyword>
<keyword id="KW-0831">Ubiquinone biosynthesis</keyword>
<sequence length="476" mass="51496">MAARIGPMAGLLCVRWWSTAQLAARGGPLVACRRWTSSSTDSVYDVVVSGGGMVGSAMACALGHDIHFHDKKILLLEAGPKKTLEKLSETYSNRVSSISLGSTTLLSSFGAWDHICNMRCKAFRRMQVWDSCSEALIMFDKDNLDDMGYIVENDVIMHAITKQLEAVADRVKVLYESKAVGYAWPGPFSLADSSPWVHITLGDGSTLQTKLLIGADGHNSGVRQAAGIQNVGWNYDQSAVVATLHLSEATENNVAWQRFLPSGPIALLPLSDTLSSLVWSTSHAHAAELVSMHEEEFVDAINSAFWSDVHHTDFVDSASAMVHHAVALLKPTKVSARQLPPSVAKVDAKSRALFPLGLGHAAEYVRPRVALIGDAAHRVHPLAGQGVNMGFGDISSLIHYLSTAAFNGKDLGSMSHLTGYETDRQRHNTALLAATDLLKRLYSTSTTPLVLLRTWGLQATNAVSPLKEQIMAFASR</sequence>
<evidence type="ECO:0000255" key="1">
    <source>
        <dbReference type="HAMAP-Rule" id="MF_03193"/>
    </source>
</evidence>
<evidence type="ECO:0000269" key="2">
    <source>
    </source>
</evidence>